<feature type="chain" id="PRO_1000164287" description="Curved DNA-binding protein">
    <location>
        <begin position="1"/>
        <end position="306"/>
    </location>
</feature>
<feature type="domain" description="J" evidence="1">
    <location>
        <begin position="5"/>
        <end position="69"/>
    </location>
</feature>
<comment type="function">
    <text evidence="1">DNA-binding protein that preferentially recognizes a curved DNA sequence. It is probably a functional analog of DnaJ; displays overlapping activities with DnaJ, but functions under different conditions, probably acting as a molecular chaperone in an adaptive response to environmental stresses other than heat shock. Lacks autonomous chaperone activity; binds native substrates and targets them for recognition by DnaK. Its activity is inhibited by the binding of CbpM.</text>
</comment>
<comment type="subcellular location">
    <subcellularLocation>
        <location evidence="1">Cytoplasm</location>
        <location evidence="1">Nucleoid</location>
    </subcellularLocation>
</comment>
<accession>B7LFA9</accession>
<reference key="1">
    <citation type="journal article" date="2009" name="PLoS Genet.">
        <title>Organised genome dynamics in the Escherichia coli species results in highly diverse adaptive paths.</title>
        <authorList>
            <person name="Touchon M."/>
            <person name="Hoede C."/>
            <person name="Tenaillon O."/>
            <person name="Barbe V."/>
            <person name="Baeriswyl S."/>
            <person name="Bidet P."/>
            <person name="Bingen E."/>
            <person name="Bonacorsi S."/>
            <person name="Bouchier C."/>
            <person name="Bouvet O."/>
            <person name="Calteau A."/>
            <person name="Chiapello H."/>
            <person name="Clermont O."/>
            <person name="Cruveiller S."/>
            <person name="Danchin A."/>
            <person name="Diard M."/>
            <person name="Dossat C."/>
            <person name="Karoui M.E."/>
            <person name="Frapy E."/>
            <person name="Garry L."/>
            <person name="Ghigo J.M."/>
            <person name="Gilles A.M."/>
            <person name="Johnson J."/>
            <person name="Le Bouguenec C."/>
            <person name="Lescat M."/>
            <person name="Mangenot S."/>
            <person name="Martinez-Jehanne V."/>
            <person name="Matic I."/>
            <person name="Nassif X."/>
            <person name="Oztas S."/>
            <person name="Petit M.A."/>
            <person name="Pichon C."/>
            <person name="Rouy Z."/>
            <person name="Ruf C.S."/>
            <person name="Schneider D."/>
            <person name="Tourret J."/>
            <person name="Vacherie B."/>
            <person name="Vallenet D."/>
            <person name="Medigue C."/>
            <person name="Rocha E.P.C."/>
            <person name="Denamur E."/>
        </authorList>
    </citation>
    <scope>NUCLEOTIDE SEQUENCE [LARGE SCALE GENOMIC DNA]</scope>
    <source>
        <strain>55989 / EAEC</strain>
    </source>
</reference>
<protein>
    <recommendedName>
        <fullName evidence="1">Curved DNA-binding protein</fullName>
    </recommendedName>
</protein>
<sequence length="306" mass="34485">MELKDYYAIMGVKPTDDLKTIKTAYRRLARKYHPDVSKEPDAEARFKEVAEAWEVLSDEQRRAEYDQMWQHRNDPQFNRQFHHSDGQSFNAEDFDDIFSSIFGQHARQSRQRPATRGHDIEIEVAVFLEETLTEHKRTISYNLPVYNAFGMIEQEIPKTLNVKIPAGVGNGQRIRLKGQGTPGENGGPNGDLWLVIHIAPHPLFDIVGQDLEIVVPVSPWEAALGAKVTVPTLKESILLTIPPGSQAGQRLRVKGKGLVSKKQTGDLYAVLKIVMPPKPDENTAALWQQLADAQSSFDPRKDWGKA</sequence>
<proteinExistence type="inferred from homology"/>
<organism>
    <name type="scientific">Escherichia coli (strain 55989 / EAEC)</name>
    <dbReference type="NCBI Taxonomy" id="585055"/>
    <lineage>
        <taxon>Bacteria</taxon>
        <taxon>Pseudomonadati</taxon>
        <taxon>Pseudomonadota</taxon>
        <taxon>Gammaproteobacteria</taxon>
        <taxon>Enterobacterales</taxon>
        <taxon>Enterobacteriaceae</taxon>
        <taxon>Escherichia</taxon>
    </lineage>
</organism>
<dbReference type="EMBL" id="CU928145">
    <property type="protein sequence ID" value="CAU96971.1"/>
    <property type="molecule type" value="Genomic_DNA"/>
</dbReference>
<dbReference type="RefSeq" id="WP_000420631.1">
    <property type="nucleotide sequence ID" value="NC_011748.1"/>
</dbReference>
<dbReference type="SMR" id="B7LFA9"/>
<dbReference type="KEGG" id="eck:EC55989_1110"/>
<dbReference type="HOGENOM" id="CLU_017633_0_0_6"/>
<dbReference type="Proteomes" id="UP000000746">
    <property type="component" value="Chromosome"/>
</dbReference>
<dbReference type="GO" id="GO:0005737">
    <property type="term" value="C:cytoplasm"/>
    <property type="evidence" value="ECO:0007669"/>
    <property type="project" value="UniProtKB-UniRule"/>
</dbReference>
<dbReference type="GO" id="GO:0009295">
    <property type="term" value="C:nucleoid"/>
    <property type="evidence" value="ECO:0007669"/>
    <property type="project" value="UniProtKB-SubCell"/>
</dbReference>
<dbReference type="GO" id="GO:0003681">
    <property type="term" value="F:bent DNA binding"/>
    <property type="evidence" value="ECO:0007669"/>
    <property type="project" value="UniProtKB-UniRule"/>
</dbReference>
<dbReference type="GO" id="GO:0051082">
    <property type="term" value="F:unfolded protein binding"/>
    <property type="evidence" value="ECO:0007669"/>
    <property type="project" value="InterPro"/>
</dbReference>
<dbReference type="GO" id="GO:0051085">
    <property type="term" value="P:chaperone cofactor-dependent protein refolding"/>
    <property type="evidence" value="ECO:0007669"/>
    <property type="project" value="TreeGrafter"/>
</dbReference>
<dbReference type="GO" id="GO:0042026">
    <property type="term" value="P:protein refolding"/>
    <property type="evidence" value="ECO:0007669"/>
    <property type="project" value="TreeGrafter"/>
</dbReference>
<dbReference type="CDD" id="cd06257">
    <property type="entry name" value="DnaJ"/>
    <property type="match status" value="1"/>
</dbReference>
<dbReference type="CDD" id="cd10747">
    <property type="entry name" value="DnaJ_C"/>
    <property type="match status" value="1"/>
</dbReference>
<dbReference type="FunFam" id="1.10.287.110:FF:000013">
    <property type="entry name" value="Curved DNA-binding protein"/>
    <property type="match status" value="1"/>
</dbReference>
<dbReference type="FunFam" id="2.60.260.20:FF:000008">
    <property type="entry name" value="Curved DNA-binding protein"/>
    <property type="match status" value="1"/>
</dbReference>
<dbReference type="FunFam" id="2.60.260.20:FF:000010">
    <property type="entry name" value="Curved DNA-binding protein"/>
    <property type="match status" value="1"/>
</dbReference>
<dbReference type="Gene3D" id="1.10.287.110">
    <property type="entry name" value="DnaJ domain"/>
    <property type="match status" value="1"/>
</dbReference>
<dbReference type="Gene3D" id="1.20.5.460">
    <property type="entry name" value="Single helix bin"/>
    <property type="match status" value="1"/>
</dbReference>
<dbReference type="Gene3D" id="2.60.260.20">
    <property type="entry name" value="Urease metallochaperone UreE, N-terminal domain"/>
    <property type="match status" value="2"/>
</dbReference>
<dbReference type="HAMAP" id="MF_01154">
    <property type="entry name" value="CbpA"/>
    <property type="match status" value="1"/>
</dbReference>
<dbReference type="InterPro" id="IPR023859">
    <property type="entry name" value="DNA-bd_curved-DNA"/>
</dbReference>
<dbReference type="InterPro" id="IPR002939">
    <property type="entry name" value="DnaJ_C"/>
</dbReference>
<dbReference type="InterPro" id="IPR001623">
    <property type="entry name" value="DnaJ_domain"/>
</dbReference>
<dbReference type="InterPro" id="IPR018253">
    <property type="entry name" value="DnaJ_domain_CS"/>
</dbReference>
<dbReference type="InterPro" id="IPR008971">
    <property type="entry name" value="HSP40/DnaJ_pept-bd"/>
</dbReference>
<dbReference type="InterPro" id="IPR036869">
    <property type="entry name" value="J_dom_sf"/>
</dbReference>
<dbReference type="NCBIfam" id="NF007618">
    <property type="entry name" value="PRK10266.1"/>
    <property type="match status" value="1"/>
</dbReference>
<dbReference type="PANTHER" id="PTHR43096">
    <property type="entry name" value="DNAJ HOMOLOG 1, MITOCHONDRIAL-RELATED"/>
    <property type="match status" value="1"/>
</dbReference>
<dbReference type="PANTHER" id="PTHR43096:SF52">
    <property type="entry name" value="DNAJ HOMOLOG 1, MITOCHONDRIAL-RELATED"/>
    <property type="match status" value="1"/>
</dbReference>
<dbReference type="Pfam" id="PF00226">
    <property type="entry name" value="DnaJ"/>
    <property type="match status" value="1"/>
</dbReference>
<dbReference type="Pfam" id="PF01556">
    <property type="entry name" value="DnaJ_C"/>
    <property type="match status" value="1"/>
</dbReference>
<dbReference type="PRINTS" id="PR00625">
    <property type="entry name" value="JDOMAIN"/>
</dbReference>
<dbReference type="SMART" id="SM00271">
    <property type="entry name" value="DnaJ"/>
    <property type="match status" value="1"/>
</dbReference>
<dbReference type="SUPFAM" id="SSF46565">
    <property type="entry name" value="Chaperone J-domain"/>
    <property type="match status" value="1"/>
</dbReference>
<dbReference type="SUPFAM" id="SSF49493">
    <property type="entry name" value="HSP40/DnaJ peptide-binding domain"/>
    <property type="match status" value="2"/>
</dbReference>
<dbReference type="PROSITE" id="PS00636">
    <property type="entry name" value="DNAJ_1"/>
    <property type="match status" value="1"/>
</dbReference>
<dbReference type="PROSITE" id="PS50076">
    <property type="entry name" value="DNAJ_2"/>
    <property type="match status" value="1"/>
</dbReference>
<gene>
    <name evidence="1" type="primary">cbpA</name>
    <name type="ordered locus">EC55989_1110</name>
</gene>
<evidence type="ECO:0000255" key="1">
    <source>
        <dbReference type="HAMAP-Rule" id="MF_01154"/>
    </source>
</evidence>
<name>CBPA_ECO55</name>
<keyword id="KW-0143">Chaperone</keyword>
<keyword id="KW-0963">Cytoplasm</keyword>
<keyword id="KW-0238">DNA-binding</keyword>
<keyword id="KW-1185">Reference proteome</keyword>